<name>GREA_NITSB</name>
<dbReference type="EMBL" id="AP009178">
    <property type="protein sequence ID" value="BAF70421.1"/>
    <property type="molecule type" value="Genomic_DNA"/>
</dbReference>
<dbReference type="RefSeq" id="WP_012082684.1">
    <property type="nucleotide sequence ID" value="NC_009662.1"/>
</dbReference>
<dbReference type="SMR" id="A6Q4L2"/>
<dbReference type="FunCoup" id="A6Q4L2">
    <property type="interactions" value="425"/>
</dbReference>
<dbReference type="STRING" id="387092.NIS_1313"/>
<dbReference type="KEGG" id="nis:NIS_1313"/>
<dbReference type="eggNOG" id="COG0782">
    <property type="taxonomic scope" value="Bacteria"/>
</dbReference>
<dbReference type="HOGENOM" id="CLU_101379_2_0_7"/>
<dbReference type="InParanoid" id="A6Q4L2"/>
<dbReference type="OrthoDB" id="9808774at2"/>
<dbReference type="Proteomes" id="UP000001118">
    <property type="component" value="Chromosome"/>
</dbReference>
<dbReference type="GO" id="GO:0003677">
    <property type="term" value="F:DNA binding"/>
    <property type="evidence" value="ECO:0007669"/>
    <property type="project" value="UniProtKB-UniRule"/>
</dbReference>
<dbReference type="GO" id="GO:0070063">
    <property type="term" value="F:RNA polymerase binding"/>
    <property type="evidence" value="ECO:0007669"/>
    <property type="project" value="InterPro"/>
</dbReference>
<dbReference type="GO" id="GO:0006354">
    <property type="term" value="P:DNA-templated transcription elongation"/>
    <property type="evidence" value="ECO:0007669"/>
    <property type="project" value="TreeGrafter"/>
</dbReference>
<dbReference type="GO" id="GO:0032784">
    <property type="term" value="P:regulation of DNA-templated transcription elongation"/>
    <property type="evidence" value="ECO:0007669"/>
    <property type="project" value="UniProtKB-UniRule"/>
</dbReference>
<dbReference type="FunFam" id="1.10.287.180:FF:000001">
    <property type="entry name" value="Transcription elongation factor GreA"/>
    <property type="match status" value="1"/>
</dbReference>
<dbReference type="FunFam" id="3.10.50.30:FF:000001">
    <property type="entry name" value="Transcription elongation factor GreA"/>
    <property type="match status" value="1"/>
</dbReference>
<dbReference type="Gene3D" id="3.10.50.30">
    <property type="entry name" value="Transcription elongation factor, GreA/GreB, C-terminal domain"/>
    <property type="match status" value="1"/>
</dbReference>
<dbReference type="Gene3D" id="1.10.287.180">
    <property type="entry name" value="Transcription elongation factor, GreA/GreB, N-terminal domain"/>
    <property type="match status" value="1"/>
</dbReference>
<dbReference type="HAMAP" id="MF_00105">
    <property type="entry name" value="GreA_GreB"/>
    <property type="match status" value="1"/>
</dbReference>
<dbReference type="InterPro" id="IPR036953">
    <property type="entry name" value="GreA/GreB_C_sf"/>
</dbReference>
<dbReference type="InterPro" id="IPR006359">
    <property type="entry name" value="Tscrpt_elong_fac_GreA"/>
</dbReference>
<dbReference type="InterPro" id="IPR028624">
    <property type="entry name" value="Tscrpt_elong_fac_GreA/B"/>
</dbReference>
<dbReference type="InterPro" id="IPR001437">
    <property type="entry name" value="Tscrpt_elong_fac_GreA/B_C"/>
</dbReference>
<dbReference type="InterPro" id="IPR023459">
    <property type="entry name" value="Tscrpt_elong_fac_GreA/B_fam"/>
</dbReference>
<dbReference type="InterPro" id="IPR022691">
    <property type="entry name" value="Tscrpt_elong_fac_GreA/B_N"/>
</dbReference>
<dbReference type="InterPro" id="IPR036805">
    <property type="entry name" value="Tscrpt_elong_fac_GreA/B_N_sf"/>
</dbReference>
<dbReference type="NCBIfam" id="TIGR01462">
    <property type="entry name" value="greA"/>
    <property type="match status" value="1"/>
</dbReference>
<dbReference type="NCBIfam" id="NF001261">
    <property type="entry name" value="PRK00226.1-2"/>
    <property type="match status" value="1"/>
</dbReference>
<dbReference type="NCBIfam" id="NF001263">
    <property type="entry name" value="PRK00226.1-4"/>
    <property type="match status" value="1"/>
</dbReference>
<dbReference type="PANTHER" id="PTHR30437">
    <property type="entry name" value="TRANSCRIPTION ELONGATION FACTOR GREA"/>
    <property type="match status" value="1"/>
</dbReference>
<dbReference type="PANTHER" id="PTHR30437:SF4">
    <property type="entry name" value="TRANSCRIPTION ELONGATION FACTOR GREA"/>
    <property type="match status" value="1"/>
</dbReference>
<dbReference type="Pfam" id="PF01272">
    <property type="entry name" value="GreA_GreB"/>
    <property type="match status" value="1"/>
</dbReference>
<dbReference type="Pfam" id="PF03449">
    <property type="entry name" value="GreA_GreB_N"/>
    <property type="match status" value="1"/>
</dbReference>
<dbReference type="PIRSF" id="PIRSF006092">
    <property type="entry name" value="GreA_GreB"/>
    <property type="match status" value="1"/>
</dbReference>
<dbReference type="SUPFAM" id="SSF54534">
    <property type="entry name" value="FKBP-like"/>
    <property type="match status" value="1"/>
</dbReference>
<dbReference type="SUPFAM" id="SSF46557">
    <property type="entry name" value="GreA transcript cleavage protein, N-terminal domain"/>
    <property type="match status" value="1"/>
</dbReference>
<sequence length="163" mass="18808">MEQKEPMTQYGYEKIQKEFEALKEERPKVVEEIERAKEHGDLRENAEYHAAKERLAFIDARLTELSDLLARAQVIDPSKLPHDKVGFGSTVKLLDIEEEEEIEYTIVGSTESNPEHGLISYNTPLARQLIGKEEGDEITVKLPKGEIDFEVLEVYYKPIKFEE</sequence>
<feature type="chain" id="PRO_1000034286" description="Transcription elongation factor GreA">
    <location>
        <begin position="1"/>
        <end position="163"/>
    </location>
</feature>
<feature type="coiled-coil region" evidence="1">
    <location>
        <begin position="12"/>
        <end position="73"/>
    </location>
</feature>
<gene>
    <name evidence="1" type="primary">greA</name>
    <name type="ordered locus">NIS_1313</name>
</gene>
<proteinExistence type="inferred from homology"/>
<reference key="1">
    <citation type="journal article" date="2007" name="Proc. Natl. Acad. Sci. U.S.A.">
        <title>Deep-sea vent epsilon-proteobacterial genomes provide insights into emergence of pathogens.</title>
        <authorList>
            <person name="Nakagawa S."/>
            <person name="Takaki Y."/>
            <person name="Shimamura S."/>
            <person name="Reysenbach A.-L."/>
            <person name="Takai K."/>
            <person name="Horikoshi K."/>
        </authorList>
    </citation>
    <scope>NUCLEOTIDE SEQUENCE [LARGE SCALE GENOMIC DNA]</scope>
    <source>
        <strain>SB155-2</strain>
    </source>
</reference>
<protein>
    <recommendedName>
        <fullName evidence="1">Transcription elongation factor GreA</fullName>
    </recommendedName>
    <alternativeName>
        <fullName evidence="1">Transcript cleavage factor GreA</fullName>
    </alternativeName>
</protein>
<accession>A6Q4L2</accession>
<evidence type="ECO:0000255" key="1">
    <source>
        <dbReference type="HAMAP-Rule" id="MF_00105"/>
    </source>
</evidence>
<keyword id="KW-0175">Coiled coil</keyword>
<keyword id="KW-0238">DNA-binding</keyword>
<keyword id="KW-1185">Reference proteome</keyword>
<keyword id="KW-0804">Transcription</keyword>
<keyword id="KW-0805">Transcription regulation</keyword>
<comment type="function">
    <text evidence="1">Necessary for efficient RNA polymerase transcription elongation past template-encoded arresting sites. The arresting sites in DNA have the property of trapping a certain fraction of elongating RNA polymerases that pass through, resulting in locked ternary complexes. Cleavage of the nascent transcript by cleavage factors such as GreA or GreB allows the resumption of elongation from the new 3'terminus. GreA releases sequences of 2 to 3 nucleotides.</text>
</comment>
<comment type="similarity">
    <text evidence="1">Belongs to the GreA/GreB family.</text>
</comment>
<organism>
    <name type="scientific">Nitratiruptor sp. (strain SB155-2)</name>
    <dbReference type="NCBI Taxonomy" id="387092"/>
    <lineage>
        <taxon>Bacteria</taxon>
        <taxon>Pseudomonadati</taxon>
        <taxon>Campylobacterota</taxon>
        <taxon>Epsilonproteobacteria</taxon>
        <taxon>Nautiliales</taxon>
        <taxon>Nitratiruptoraceae</taxon>
        <taxon>Nitratiruptor</taxon>
    </lineage>
</organism>